<keyword id="KW-1185">Reference proteome</keyword>
<name>YCGI_BACSU</name>
<feature type="chain" id="PRO_0000049477" description="Uncharacterized protein YcgI">
    <location>
        <begin position="1"/>
        <end position="198"/>
    </location>
</feature>
<protein>
    <recommendedName>
        <fullName>Uncharacterized protein YcgI</fullName>
    </recommendedName>
</protein>
<accession>O31473</accession>
<gene>
    <name type="primary">ycgI</name>
    <name type="ordered locus">BSU03120</name>
</gene>
<proteinExistence type="predicted"/>
<reference key="1">
    <citation type="journal article" date="1997" name="Nature">
        <title>The complete genome sequence of the Gram-positive bacterium Bacillus subtilis.</title>
        <authorList>
            <person name="Kunst F."/>
            <person name="Ogasawara N."/>
            <person name="Moszer I."/>
            <person name="Albertini A.M."/>
            <person name="Alloni G."/>
            <person name="Azevedo V."/>
            <person name="Bertero M.G."/>
            <person name="Bessieres P."/>
            <person name="Bolotin A."/>
            <person name="Borchert S."/>
            <person name="Borriss R."/>
            <person name="Boursier L."/>
            <person name="Brans A."/>
            <person name="Braun M."/>
            <person name="Brignell S.C."/>
            <person name="Bron S."/>
            <person name="Brouillet S."/>
            <person name="Bruschi C.V."/>
            <person name="Caldwell B."/>
            <person name="Capuano V."/>
            <person name="Carter N.M."/>
            <person name="Choi S.-K."/>
            <person name="Codani J.-J."/>
            <person name="Connerton I.F."/>
            <person name="Cummings N.J."/>
            <person name="Daniel R.A."/>
            <person name="Denizot F."/>
            <person name="Devine K.M."/>
            <person name="Duesterhoeft A."/>
            <person name="Ehrlich S.D."/>
            <person name="Emmerson P.T."/>
            <person name="Entian K.-D."/>
            <person name="Errington J."/>
            <person name="Fabret C."/>
            <person name="Ferrari E."/>
            <person name="Foulger D."/>
            <person name="Fritz C."/>
            <person name="Fujita M."/>
            <person name="Fujita Y."/>
            <person name="Fuma S."/>
            <person name="Galizzi A."/>
            <person name="Galleron N."/>
            <person name="Ghim S.-Y."/>
            <person name="Glaser P."/>
            <person name="Goffeau A."/>
            <person name="Golightly E.J."/>
            <person name="Grandi G."/>
            <person name="Guiseppi G."/>
            <person name="Guy B.J."/>
            <person name="Haga K."/>
            <person name="Haiech J."/>
            <person name="Harwood C.R."/>
            <person name="Henaut A."/>
            <person name="Hilbert H."/>
            <person name="Holsappel S."/>
            <person name="Hosono S."/>
            <person name="Hullo M.-F."/>
            <person name="Itaya M."/>
            <person name="Jones L.-M."/>
            <person name="Joris B."/>
            <person name="Karamata D."/>
            <person name="Kasahara Y."/>
            <person name="Klaerr-Blanchard M."/>
            <person name="Klein C."/>
            <person name="Kobayashi Y."/>
            <person name="Koetter P."/>
            <person name="Koningstein G."/>
            <person name="Krogh S."/>
            <person name="Kumano M."/>
            <person name="Kurita K."/>
            <person name="Lapidus A."/>
            <person name="Lardinois S."/>
            <person name="Lauber J."/>
            <person name="Lazarevic V."/>
            <person name="Lee S.-M."/>
            <person name="Levine A."/>
            <person name="Liu H."/>
            <person name="Masuda S."/>
            <person name="Mauel C."/>
            <person name="Medigue C."/>
            <person name="Medina N."/>
            <person name="Mellado R.P."/>
            <person name="Mizuno M."/>
            <person name="Moestl D."/>
            <person name="Nakai S."/>
            <person name="Noback M."/>
            <person name="Noone D."/>
            <person name="O'Reilly M."/>
            <person name="Ogawa K."/>
            <person name="Ogiwara A."/>
            <person name="Oudega B."/>
            <person name="Park S.-H."/>
            <person name="Parro V."/>
            <person name="Pohl T.M."/>
            <person name="Portetelle D."/>
            <person name="Porwollik S."/>
            <person name="Prescott A.M."/>
            <person name="Presecan E."/>
            <person name="Pujic P."/>
            <person name="Purnelle B."/>
            <person name="Rapoport G."/>
            <person name="Rey M."/>
            <person name="Reynolds S."/>
            <person name="Rieger M."/>
            <person name="Rivolta C."/>
            <person name="Rocha E."/>
            <person name="Roche B."/>
            <person name="Rose M."/>
            <person name="Sadaie Y."/>
            <person name="Sato T."/>
            <person name="Scanlan E."/>
            <person name="Schleich S."/>
            <person name="Schroeter R."/>
            <person name="Scoffone F."/>
            <person name="Sekiguchi J."/>
            <person name="Sekowska A."/>
            <person name="Seror S.J."/>
            <person name="Serror P."/>
            <person name="Shin B.-S."/>
            <person name="Soldo B."/>
            <person name="Sorokin A."/>
            <person name="Tacconi E."/>
            <person name="Takagi T."/>
            <person name="Takahashi H."/>
            <person name="Takemaru K."/>
            <person name="Takeuchi M."/>
            <person name="Tamakoshi A."/>
            <person name="Tanaka T."/>
            <person name="Terpstra P."/>
            <person name="Tognoni A."/>
            <person name="Tosato V."/>
            <person name="Uchiyama S."/>
            <person name="Vandenbol M."/>
            <person name="Vannier F."/>
            <person name="Vassarotti A."/>
            <person name="Viari A."/>
            <person name="Wambutt R."/>
            <person name="Wedler E."/>
            <person name="Wedler H."/>
            <person name="Weitzenegger T."/>
            <person name="Winters P."/>
            <person name="Wipat A."/>
            <person name="Yamamoto H."/>
            <person name="Yamane K."/>
            <person name="Yasumoto K."/>
            <person name="Yata K."/>
            <person name="Yoshida K."/>
            <person name="Yoshikawa H.-F."/>
            <person name="Zumstein E."/>
            <person name="Yoshikawa H."/>
            <person name="Danchin A."/>
        </authorList>
    </citation>
    <scope>NUCLEOTIDE SEQUENCE [LARGE SCALE GENOMIC DNA]</scope>
    <source>
        <strain>168</strain>
    </source>
</reference>
<reference key="2">
    <citation type="journal article" date="1999" name="Genome Res.">
        <title>Detecting and analyzing DNA sequencing errors: toward a higher quality of the Bacillus subtilis genome sequence.</title>
        <authorList>
            <person name="Medigue C."/>
            <person name="Rose M."/>
            <person name="Viari A."/>
            <person name="Danchin A."/>
        </authorList>
    </citation>
    <scope>SEQUENCE REVISION</scope>
</reference>
<reference key="3">
    <citation type="journal article" date="2009" name="Microbiology">
        <title>From a consortium sequence to a unified sequence: the Bacillus subtilis 168 reference genome a decade later.</title>
        <authorList>
            <person name="Barbe V."/>
            <person name="Cruveiller S."/>
            <person name="Kunst F."/>
            <person name="Lenoble P."/>
            <person name="Meurice G."/>
            <person name="Sekowska A."/>
            <person name="Vallenet D."/>
            <person name="Wang T."/>
            <person name="Moszer I."/>
            <person name="Medigue C."/>
            <person name="Danchin A."/>
        </authorList>
    </citation>
    <scope>SEQUENCE REVISION</scope>
</reference>
<dbReference type="EMBL" id="AL009126">
    <property type="protein sequence ID" value="CAB12106.3"/>
    <property type="molecule type" value="Genomic_DNA"/>
</dbReference>
<dbReference type="PIR" id="D69758">
    <property type="entry name" value="D69758"/>
</dbReference>
<dbReference type="RefSeq" id="NP_388194.3">
    <property type="nucleotide sequence ID" value="NC_000964.3"/>
</dbReference>
<dbReference type="RefSeq" id="WP_003246345.1">
    <property type="nucleotide sequence ID" value="NZ_OZ025638.1"/>
</dbReference>
<dbReference type="SMR" id="O31473"/>
<dbReference type="FunCoup" id="O31473">
    <property type="interactions" value="119"/>
</dbReference>
<dbReference type="STRING" id="224308.BSU03120"/>
<dbReference type="PaxDb" id="224308-BSU03120"/>
<dbReference type="EnsemblBacteria" id="CAB12106">
    <property type="protein sequence ID" value="CAB12106"/>
    <property type="gene ID" value="BSU_03120"/>
</dbReference>
<dbReference type="GeneID" id="938342"/>
<dbReference type="KEGG" id="bsu:BSU03120"/>
<dbReference type="PATRIC" id="fig|224308.179.peg.326"/>
<dbReference type="eggNOG" id="COG3665">
    <property type="taxonomic scope" value="Bacteria"/>
</dbReference>
<dbReference type="InParanoid" id="O31473"/>
<dbReference type="OrthoDB" id="9772660at2"/>
<dbReference type="PhylomeDB" id="O31473"/>
<dbReference type="BioCyc" id="BSUB:BSU03120-MONOMER"/>
<dbReference type="Proteomes" id="UP000001570">
    <property type="component" value="Chromosome"/>
</dbReference>
<dbReference type="InterPro" id="IPR018959">
    <property type="entry name" value="DUF1989"/>
</dbReference>
<dbReference type="PANTHER" id="PTHR31527">
    <property type="entry name" value="RE64534P"/>
    <property type="match status" value="1"/>
</dbReference>
<dbReference type="PANTHER" id="PTHR31527:SF0">
    <property type="entry name" value="RE64534P"/>
    <property type="match status" value="1"/>
</dbReference>
<dbReference type="Pfam" id="PF09347">
    <property type="entry name" value="DUF1989"/>
    <property type="match status" value="1"/>
</dbReference>
<sequence>MTQQYIVEPKKGLGLKLKKGQILKVVDVEGQQVADFVAYHAKDFYEHLDQGATIDANHSIHVKVNDHLYSNLYKPMLTLIEDTVGKHDLLLPACRPDMNRLLYGKQKDEFQDTCYDNMNRALEQFGVPKPHMHYPFAIFMNTVLDEKGNLSVETPLSNAGDYVRLRAEMDLIVAFSSCPIEKGKCNGDSVTSIRVEVS</sequence>
<organism>
    <name type="scientific">Bacillus subtilis (strain 168)</name>
    <dbReference type="NCBI Taxonomy" id="224308"/>
    <lineage>
        <taxon>Bacteria</taxon>
        <taxon>Bacillati</taxon>
        <taxon>Bacillota</taxon>
        <taxon>Bacilli</taxon>
        <taxon>Bacillales</taxon>
        <taxon>Bacillaceae</taxon>
        <taxon>Bacillus</taxon>
    </lineage>
</organism>